<sequence>MKRTFQPSVLKRNRSHGFRARMATKNGRQVLARRRAKGRARLTVSK</sequence>
<dbReference type="EMBL" id="CU928160">
    <property type="protein sequence ID" value="CAR00677.1"/>
    <property type="molecule type" value="Genomic_DNA"/>
</dbReference>
<dbReference type="RefSeq" id="WP_000831330.1">
    <property type="nucleotide sequence ID" value="NC_011741.1"/>
</dbReference>
<dbReference type="SMR" id="B7M555"/>
<dbReference type="GeneID" id="98190980"/>
<dbReference type="KEGG" id="ecr:ECIAI1_3882"/>
<dbReference type="HOGENOM" id="CLU_129938_2_1_6"/>
<dbReference type="GO" id="GO:1990904">
    <property type="term" value="C:ribonucleoprotein complex"/>
    <property type="evidence" value="ECO:0007669"/>
    <property type="project" value="UniProtKB-KW"/>
</dbReference>
<dbReference type="GO" id="GO:0005840">
    <property type="term" value="C:ribosome"/>
    <property type="evidence" value="ECO:0007669"/>
    <property type="project" value="UniProtKB-KW"/>
</dbReference>
<dbReference type="GO" id="GO:0003735">
    <property type="term" value="F:structural constituent of ribosome"/>
    <property type="evidence" value="ECO:0007669"/>
    <property type="project" value="InterPro"/>
</dbReference>
<dbReference type="GO" id="GO:0006412">
    <property type="term" value="P:translation"/>
    <property type="evidence" value="ECO:0007669"/>
    <property type="project" value="UniProtKB-UniRule"/>
</dbReference>
<dbReference type="FunFam" id="1.10.287.3980:FF:000001">
    <property type="entry name" value="Mitochondrial ribosomal protein L34"/>
    <property type="match status" value="1"/>
</dbReference>
<dbReference type="Gene3D" id="1.10.287.3980">
    <property type="match status" value="1"/>
</dbReference>
<dbReference type="HAMAP" id="MF_00391">
    <property type="entry name" value="Ribosomal_bL34"/>
    <property type="match status" value="1"/>
</dbReference>
<dbReference type="InterPro" id="IPR000271">
    <property type="entry name" value="Ribosomal_bL34"/>
</dbReference>
<dbReference type="InterPro" id="IPR020939">
    <property type="entry name" value="Ribosomal_bL34_CS"/>
</dbReference>
<dbReference type="NCBIfam" id="TIGR01030">
    <property type="entry name" value="rpmH_bact"/>
    <property type="match status" value="1"/>
</dbReference>
<dbReference type="PANTHER" id="PTHR14503:SF4">
    <property type="entry name" value="LARGE RIBOSOMAL SUBUNIT PROTEIN BL34M"/>
    <property type="match status" value="1"/>
</dbReference>
<dbReference type="PANTHER" id="PTHR14503">
    <property type="entry name" value="MITOCHONDRIAL RIBOSOMAL PROTEIN 34 FAMILY MEMBER"/>
    <property type="match status" value="1"/>
</dbReference>
<dbReference type="Pfam" id="PF00468">
    <property type="entry name" value="Ribosomal_L34"/>
    <property type="match status" value="1"/>
</dbReference>
<dbReference type="PROSITE" id="PS00784">
    <property type="entry name" value="RIBOSOMAL_L34"/>
    <property type="match status" value="1"/>
</dbReference>
<name>RL34_ECO8A</name>
<reference key="1">
    <citation type="journal article" date="2009" name="PLoS Genet.">
        <title>Organised genome dynamics in the Escherichia coli species results in highly diverse adaptive paths.</title>
        <authorList>
            <person name="Touchon M."/>
            <person name="Hoede C."/>
            <person name="Tenaillon O."/>
            <person name="Barbe V."/>
            <person name="Baeriswyl S."/>
            <person name="Bidet P."/>
            <person name="Bingen E."/>
            <person name="Bonacorsi S."/>
            <person name="Bouchier C."/>
            <person name="Bouvet O."/>
            <person name="Calteau A."/>
            <person name="Chiapello H."/>
            <person name="Clermont O."/>
            <person name="Cruveiller S."/>
            <person name="Danchin A."/>
            <person name="Diard M."/>
            <person name="Dossat C."/>
            <person name="Karoui M.E."/>
            <person name="Frapy E."/>
            <person name="Garry L."/>
            <person name="Ghigo J.M."/>
            <person name="Gilles A.M."/>
            <person name="Johnson J."/>
            <person name="Le Bouguenec C."/>
            <person name="Lescat M."/>
            <person name="Mangenot S."/>
            <person name="Martinez-Jehanne V."/>
            <person name="Matic I."/>
            <person name="Nassif X."/>
            <person name="Oztas S."/>
            <person name="Petit M.A."/>
            <person name="Pichon C."/>
            <person name="Rouy Z."/>
            <person name="Ruf C.S."/>
            <person name="Schneider D."/>
            <person name="Tourret J."/>
            <person name="Vacherie B."/>
            <person name="Vallenet D."/>
            <person name="Medigue C."/>
            <person name="Rocha E.P.C."/>
            <person name="Denamur E."/>
        </authorList>
    </citation>
    <scope>NUCLEOTIDE SEQUENCE [LARGE SCALE GENOMIC DNA]</scope>
    <source>
        <strain>IAI1</strain>
    </source>
</reference>
<protein>
    <recommendedName>
        <fullName evidence="1">Large ribosomal subunit protein bL34</fullName>
    </recommendedName>
    <alternativeName>
        <fullName evidence="2">50S ribosomal protein L34</fullName>
    </alternativeName>
</protein>
<proteinExistence type="inferred from homology"/>
<organism>
    <name type="scientific">Escherichia coli O8 (strain IAI1)</name>
    <dbReference type="NCBI Taxonomy" id="585034"/>
    <lineage>
        <taxon>Bacteria</taxon>
        <taxon>Pseudomonadati</taxon>
        <taxon>Pseudomonadota</taxon>
        <taxon>Gammaproteobacteria</taxon>
        <taxon>Enterobacterales</taxon>
        <taxon>Enterobacteriaceae</taxon>
        <taxon>Escherichia</taxon>
    </lineage>
</organism>
<keyword id="KW-0687">Ribonucleoprotein</keyword>
<keyword id="KW-0689">Ribosomal protein</keyword>
<evidence type="ECO:0000255" key="1">
    <source>
        <dbReference type="HAMAP-Rule" id="MF_00391"/>
    </source>
</evidence>
<evidence type="ECO:0000305" key="2"/>
<accession>B7M555</accession>
<gene>
    <name evidence="1" type="primary">rpmH</name>
    <name type="ordered locus">ECIAI1_3882</name>
</gene>
<comment type="similarity">
    <text evidence="1">Belongs to the bacterial ribosomal protein bL34 family.</text>
</comment>
<feature type="chain" id="PRO_1000196049" description="Large ribosomal subunit protein bL34">
    <location>
        <begin position="1"/>
        <end position="46"/>
    </location>
</feature>